<evidence type="ECO:0000255" key="1">
    <source>
        <dbReference type="HAMAP-Rule" id="MF_00455"/>
    </source>
</evidence>
<feature type="chain" id="PRO_1000026436" description="Xylose isomerase">
    <location>
        <begin position="1"/>
        <end position="440"/>
    </location>
</feature>
<feature type="active site" evidence="1">
    <location>
        <position position="100"/>
    </location>
</feature>
<feature type="active site" evidence="1">
    <location>
        <position position="103"/>
    </location>
</feature>
<feature type="binding site" evidence="1">
    <location>
        <position position="231"/>
    </location>
    <ligand>
        <name>Mg(2+)</name>
        <dbReference type="ChEBI" id="CHEBI:18420"/>
        <label>1</label>
    </ligand>
</feature>
<feature type="binding site" evidence="1">
    <location>
        <position position="267"/>
    </location>
    <ligand>
        <name>Mg(2+)</name>
        <dbReference type="ChEBI" id="CHEBI:18420"/>
        <label>1</label>
    </ligand>
</feature>
<feature type="binding site" evidence="1">
    <location>
        <position position="267"/>
    </location>
    <ligand>
        <name>Mg(2+)</name>
        <dbReference type="ChEBI" id="CHEBI:18420"/>
        <label>2</label>
    </ligand>
</feature>
<feature type="binding site" evidence="1">
    <location>
        <position position="270"/>
    </location>
    <ligand>
        <name>Mg(2+)</name>
        <dbReference type="ChEBI" id="CHEBI:18420"/>
        <label>2</label>
    </ligand>
</feature>
<feature type="binding site" evidence="1">
    <location>
        <position position="295"/>
    </location>
    <ligand>
        <name>Mg(2+)</name>
        <dbReference type="ChEBI" id="CHEBI:18420"/>
        <label>1</label>
    </ligand>
</feature>
<feature type="binding site" evidence="1">
    <location>
        <position position="306"/>
    </location>
    <ligand>
        <name>Mg(2+)</name>
        <dbReference type="ChEBI" id="CHEBI:18420"/>
        <label>2</label>
    </ligand>
</feature>
<feature type="binding site" evidence="1">
    <location>
        <position position="308"/>
    </location>
    <ligand>
        <name>Mg(2+)</name>
        <dbReference type="ChEBI" id="CHEBI:18420"/>
        <label>2</label>
    </ligand>
</feature>
<feature type="binding site" evidence="1">
    <location>
        <position position="338"/>
    </location>
    <ligand>
        <name>Mg(2+)</name>
        <dbReference type="ChEBI" id="CHEBI:18420"/>
        <label>1</label>
    </ligand>
</feature>
<dbReference type="EC" id="5.3.1.5" evidence="1"/>
<dbReference type="EMBL" id="CP000616">
    <property type="protein sequence ID" value="ABO59348.1"/>
    <property type="molecule type" value="Genomic_DNA"/>
</dbReference>
<dbReference type="SMR" id="A4JSU5"/>
<dbReference type="KEGG" id="bvi:Bcep1808_6451"/>
<dbReference type="eggNOG" id="COG2115">
    <property type="taxonomic scope" value="Bacteria"/>
</dbReference>
<dbReference type="HOGENOM" id="CLU_037261_1_0_4"/>
<dbReference type="Proteomes" id="UP000002287">
    <property type="component" value="Chromosome 3"/>
</dbReference>
<dbReference type="GO" id="GO:0005737">
    <property type="term" value="C:cytoplasm"/>
    <property type="evidence" value="ECO:0007669"/>
    <property type="project" value="UniProtKB-SubCell"/>
</dbReference>
<dbReference type="GO" id="GO:0000287">
    <property type="term" value="F:magnesium ion binding"/>
    <property type="evidence" value="ECO:0007669"/>
    <property type="project" value="UniProtKB-UniRule"/>
</dbReference>
<dbReference type="GO" id="GO:0009045">
    <property type="term" value="F:xylose isomerase activity"/>
    <property type="evidence" value="ECO:0007669"/>
    <property type="project" value="UniProtKB-UniRule"/>
</dbReference>
<dbReference type="GO" id="GO:0042732">
    <property type="term" value="P:D-xylose metabolic process"/>
    <property type="evidence" value="ECO:0007669"/>
    <property type="project" value="UniProtKB-UniRule"/>
</dbReference>
<dbReference type="FunFam" id="3.20.20.150:FF:000002">
    <property type="entry name" value="Xylose isomerase"/>
    <property type="match status" value="1"/>
</dbReference>
<dbReference type="Gene3D" id="3.20.20.150">
    <property type="entry name" value="Divalent-metal-dependent TIM barrel enzymes"/>
    <property type="match status" value="1"/>
</dbReference>
<dbReference type="HAMAP" id="MF_00455">
    <property type="entry name" value="Xylose_isom_A"/>
    <property type="match status" value="1"/>
</dbReference>
<dbReference type="InterPro" id="IPR036237">
    <property type="entry name" value="Xyl_isomerase-like_sf"/>
</dbReference>
<dbReference type="InterPro" id="IPR013452">
    <property type="entry name" value="Xylose_isom_bac"/>
</dbReference>
<dbReference type="InterPro" id="IPR001998">
    <property type="entry name" value="Xylose_isomerase"/>
</dbReference>
<dbReference type="NCBIfam" id="NF003998">
    <property type="entry name" value="PRK05474.1"/>
    <property type="match status" value="1"/>
</dbReference>
<dbReference type="NCBIfam" id="TIGR02630">
    <property type="entry name" value="xylose_isom_A"/>
    <property type="match status" value="1"/>
</dbReference>
<dbReference type="PANTHER" id="PTHR48408">
    <property type="match status" value="1"/>
</dbReference>
<dbReference type="PANTHER" id="PTHR48408:SF1">
    <property type="entry name" value="XYLOSE ISOMERASE"/>
    <property type="match status" value="1"/>
</dbReference>
<dbReference type="PRINTS" id="PR00688">
    <property type="entry name" value="XYLOSISMRASE"/>
</dbReference>
<dbReference type="SUPFAM" id="SSF51658">
    <property type="entry name" value="Xylose isomerase-like"/>
    <property type="match status" value="1"/>
</dbReference>
<dbReference type="PROSITE" id="PS51415">
    <property type="entry name" value="XYLOSE_ISOMERASE"/>
    <property type="match status" value="1"/>
</dbReference>
<proteinExistence type="inferred from homology"/>
<name>XYLA_BURVG</name>
<protein>
    <recommendedName>
        <fullName evidence="1">Xylose isomerase</fullName>
        <ecNumber evidence="1">5.3.1.5</ecNumber>
    </recommendedName>
</protein>
<gene>
    <name evidence="1" type="primary">xylA</name>
    <name type="ordered locus">Bcep1808_6451</name>
</gene>
<comment type="catalytic activity">
    <reaction evidence="1">
        <text>alpha-D-xylose = alpha-D-xylulofuranose</text>
        <dbReference type="Rhea" id="RHEA:22816"/>
        <dbReference type="ChEBI" id="CHEBI:28518"/>
        <dbReference type="ChEBI" id="CHEBI:188998"/>
        <dbReference type="EC" id="5.3.1.5"/>
    </reaction>
</comment>
<comment type="cofactor">
    <cofactor evidence="1">
        <name>Mg(2+)</name>
        <dbReference type="ChEBI" id="CHEBI:18420"/>
    </cofactor>
    <text evidence="1">Binds 2 magnesium ions per subunit.</text>
</comment>
<comment type="subunit">
    <text evidence="1">Homotetramer.</text>
</comment>
<comment type="subcellular location">
    <subcellularLocation>
        <location evidence="1">Cytoplasm</location>
    </subcellularLocation>
</comment>
<comment type="similarity">
    <text evidence="1">Belongs to the xylose isomerase family.</text>
</comment>
<sequence>MSYFEHIPAIRYEGPQSDNPLAYHHYDPAKRVLGKTLAEHLRIAVCYWHTFVWPGHDMFGQGTFVRPWQQPGDPLERARMKADAAFEFFSKLGTPFYTFHDTDVAPEGDNLREYTANFARMVDYLGERQQASGVRLLWGTANLFSHPRFAAGAATNPNPDVFAWAATQVRHALDATHRLGGENYVLWGGREGYETLLNTDLKRERDQFARFLSMVVEHKHRIGFNGALLIEPKPQEPTKHQYDYDVATVHGFLVQYGLQDEIRVNIEANHATLAGHSFHHEIANAFALGVFGSVDANRGDPQNGWDTDQFPNSVEELTLAFYEILRHGGFTTGGMNFDAKVRRQSVAAEDLFYGHVGAIDVLALALERAAVLVENDRLDALRRQRYAQWDDAFGRKILSGGYTLQSLADDALARGVNPQHVSGAQERLENIVNQAIYALR</sequence>
<organism>
    <name type="scientific">Burkholderia vietnamiensis (strain G4 / LMG 22486)</name>
    <name type="common">Burkholderia cepacia (strain R1808)</name>
    <dbReference type="NCBI Taxonomy" id="269482"/>
    <lineage>
        <taxon>Bacteria</taxon>
        <taxon>Pseudomonadati</taxon>
        <taxon>Pseudomonadota</taxon>
        <taxon>Betaproteobacteria</taxon>
        <taxon>Burkholderiales</taxon>
        <taxon>Burkholderiaceae</taxon>
        <taxon>Burkholderia</taxon>
        <taxon>Burkholderia cepacia complex</taxon>
    </lineage>
</organism>
<keyword id="KW-0119">Carbohydrate metabolism</keyword>
<keyword id="KW-0963">Cytoplasm</keyword>
<keyword id="KW-0413">Isomerase</keyword>
<keyword id="KW-0460">Magnesium</keyword>
<keyword id="KW-0479">Metal-binding</keyword>
<keyword id="KW-0859">Xylose metabolism</keyword>
<reference key="1">
    <citation type="submission" date="2007-03" db="EMBL/GenBank/DDBJ databases">
        <title>Complete sequence of chromosome 3 of Burkholderia vietnamiensis G4.</title>
        <authorList>
            <consortium name="US DOE Joint Genome Institute"/>
            <person name="Copeland A."/>
            <person name="Lucas S."/>
            <person name="Lapidus A."/>
            <person name="Barry K."/>
            <person name="Detter J.C."/>
            <person name="Glavina del Rio T."/>
            <person name="Hammon N."/>
            <person name="Israni S."/>
            <person name="Dalin E."/>
            <person name="Tice H."/>
            <person name="Pitluck S."/>
            <person name="Chain P."/>
            <person name="Malfatti S."/>
            <person name="Shin M."/>
            <person name="Vergez L."/>
            <person name="Schmutz J."/>
            <person name="Larimer F."/>
            <person name="Land M."/>
            <person name="Hauser L."/>
            <person name="Kyrpides N."/>
            <person name="Tiedje J."/>
            <person name="Richardson P."/>
        </authorList>
    </citation>
    <scope>NUCLEOTIDE SEQUENCE [LARGE SCALE GENOMIC DNA]</scope>
    <source>
        <strain>G4 / LMG 22486</strain>
    </source>
</reference>
<accession>A4JSU5</accession>